<accession>Q0G9N7</accession>
<comment type="subcellular location">
    <subcellularLocation>
        <location>Plastid</location>
        <location>Chloroplast</location>
    </subcellularLocation>
</comment>
<comment type="similarity">
    <text evidence="1">Belongs to the bacterial ribosomal protein bS16 family.</text>
</comment>
<dbReference type="EMBL" id="DQ899947">
    <property type="protein sequence ID" value="ABI32491.1"/>
    <property type="molecule type" value="Genomic_DNA"/>
</dbReference>
<dbReference type="RefSeq" id="YP_740184.1">
    <property type="nucleotide sequence ID" value="NC_008326.1"/>
</dbReference>
<dbReference type="SMR" id="Q0G9N7"/>
<dbReference type="GeneID" id="4266583"/>
<dbReference type="GO" id="GO:0009507">
    <property type="term" value="C:chloroplast"/>
    <property type="evidence" value="ECO:0007669"/>
    <property type="project" value="UniProtKB-SubCell"/>
</dbReference>
<dbReference type="GO" id="GO:0005739">
    <property type="term" value="C:mitochondrion"/>
    <property type="evidence" value="ECO:0007669"/>
    <property type="project" value="GOC"/>
</dbReference>
<dbReference type="GO" id="GO:0015935">
    <property type="term" value="C:small ribosomal subunit"/>
    <property type="evidence" value="ECO:0007669"/>
    <property type="project" value="TreeGrafter"/>
</dbReference>
<dbReference type="GO" id="GO:0003735">
    <property type="term" value="F:structural constituent of ribosome"/>
    <property type="evidence" value="ECO:0007669"/>
    <property type="project" value="InterPro"/>
</dbReference>
<dbReference type="GO" id="GO:0032543">
    <property type="term" value="P:mitochondrial translation"/>
    <property type="evidence" value="ECO:0007669"/>
    <property type="project" value="TreeGrafter"/>
</dbReference>
<dbReference type="FunFam" id="3.30.1320.10:FF:000003">
    <property type="entry name" value="30S ribosomal protein S16, chloroplastic"/>
    <property type="match status" value="1"/>
</dbReference>
<dbReference type="Gene3D" id="3.30.1320.10">
    <property type="match status" value="1"/>
</dbReference>
<dbReference type="HAMAP" id="MF_00385">
    <property type="entry name" value="Ribosomal_bS16"/>
    <property type="match status" value="1"/>
</dbReference>
<dbReference type="InterPro" id="IPR000307">
    <property type="entry name" value="Ribosomal_bS16"/>
</dbReference>
<dbReference type="InterPro" id="IPR020592">
    <property type="entry name" value="Ribosomal_bS16_CS"/>
</dbReference>
<dbReference type="InterPro" id="IPR023803">
    <property type="entry name" value="Ribosomal_bS16_dom_sf"/>
</dbReference>
<dbReference type="NCBIfam" id="TIGR00002">
    <property type="entry name" value="S16"/>
    <property type="match status" value="1"/>
</dbReference>
<dbReference type="PANTHER" id="PTHR12919">
    <property type="entry name" value="30S RIBOSOMAL PROTEIN S16"/>
    <property type="match status" value="1"/>
</dbReference>
<dbReference type="PANTHER" id="PTHR12919:SF20">
    <property type="entry name" value="SMALL RIBOSOMAL SUBUNIT PROTEIN BS16M"/>
    <property type="match status" value="1"/>
</dbReference>
<dbReference type="Pfam" id="PF00886">
    <property type="entry name" value="Ribosomal_S16"/>
    <property type="match status" value="1"/>
</dbReference>
<dbReference type="SUPFAM" id="SSF54565">
    <property type="entry name" value="Ribosomal protein S16"/>
    <property type="match status" value="1"/>
</dbReference>
<dbReference type="PROSITE" id="PS00732">
    <property type="entry name" value="RIBOSOMAL_S16"/>
    <property type="match status" value="1"/>
</dbReference>
<protein>
    <recommendedName>
        <fullName evidence="1">Small ribosomal subunit protein bS16c</fullName>
    </recommendedName>
    <alternativeName>
        <fullName evidence="2">30S ribosomal protein S16, chloroplastic</fullName>
    </alternativeName>
</protein>
<keyword id="KW-0150">Chloroplast</keyword>
<keyword id="KW-0934">Plastid</keyword>
<keyword id="KW-0687">Ribonucleoprotein</keyword>
<keyword id="KW-0689">Ribosomal protein</keyword>
<evidence type="ECO:0000255" key="1">
    <source>
        <dbReference type="HAMAP-Rule" id="MF_00385"/>
    </source>
</evidence>
<evidence type="ECO:0000305" key="2"/>
<gene>
    <name evidence="1" type="primary">rps16</name>
</gene>
<geneLocation type="chloroplast"/>
<name>RR16_LIRTU</name>
<feature type="chain" id="PRO_0000276952" description="Small ribosomal subunit protein bS16c">
    <location>
        <begin position="1"/>
        <end position="86"/>
    </location>
</feature>
<organism>
    <name type="scientific">Liriodendron tulipifera</name>
    <name type="common">Tuliptree</name>
    <name type="synonym">Tulip poplar</name>
    <dbReference type="NCBI Taxonomy" id="3415"/>
    <lineage>
        <taxon>Eukaryota</taxon>
        <taxon>Viridiplantae</taxon>
        <taxon>Streptophyta</taxon>
        <taxon>Embryophyta</taxon>
        <taxon>Tracheophyta</taxon>
        <taxon>Spermatophyta</taxon>
        <taxon>Magnoliopsida</taxon>
        <taxon>Magnoliidae</taxon>
        <taxon>Magnoliales</taxon>
        <taxon>Magnoliaceae</taxon>
        <taxon>Liriodendron</taxon>
    </lineage>
</organism>
<proteinExistence type="inferred from homology"/>
<reference key="1">
    <citation type="journal article" date="2006" name="BMC Evol. Biol.">
        <title>Complete plastid genome sequences of Drimys, Liriodendron, and Piper: implications for the phylogenetic relationships of magnoliids.</title>
        <authorList>
            <person name="Cai Z."/>
            <person name="Penaflor C."/>
            <person name="Kuehl J.V."/>
            <person name="Leebens-Mack J."/>
            <person name="Carlson J.E."/>
            <person name="dePamphilis C.W."/>
            <person name="Boore J.L."/>
            <person name="Jansen R.K."/>
        </authorList>
    </citation>
    <scope>NUCLEOTIDE SEQUENCE [LARGE SCALE GENOMIC DNA]</scope>
</reference>
<sequence>MVKLRLKRCGRKQRAIYRIVAIDVRSRREGRDLRKVGFYDPIKNQTYSNVPAILYFLEKGAQPTGTVHDISKKAEVFKELRINQTK</sequence>